<evidence type="ECO:0000255" key="1"/>
<evidence type="ECO:0000305" key="2"/>
<keyword id="KW-1003">Cell membrane</keyword>
<keyword id="KW-0472">Membrane</keyword>
<keyword id="KW-1185">Reference proteome</keyword>
<keyword id="KW-0812">Transmembrane</keyword>
<keyword id="KW-1133">Transmembrane helix</keyword>
<accession>P96607</accession>
<sequence length="111" mass="12927">MRNFITALPIVLLLGFSFVSFMFQFEHLVYFRLALGLFSLVGLYMIYKMKTGIRYFIIYLYASWIVLAAVTAFEEPIFSSFFFGGLVMTMGYLTYMLIYLGMKQDRDANPV</sequence>
<gene>
    <name type="primary">ydbL</name>
    <name type="ordered locus">BSU04510</name>
</gene>
<comment type="subcellular location">
    <subcellularLocation>
        <location evidence="2">Cell membrane</location>
        <topology evidence="2">Multi-pass membrane protein</topology>
    </subcellularLocation>
</comment>
<organism>
    <name type="scientific">Bacillus subtilis (strain 168)</name>
    <dbReference type="NCBI Taxonomy" id="224308"/>
    <lineage>
        <taxon>Bacteria</taxon>
        <taxon>Bacillati</taxon>
        <taxon>Bacillota</taxon>
        <taxon>Bacilli</taxon>
        <taxon>Bacillales</taxon>
        <taxon>Bacillaceae</taxon>
        <taxon>Bacillus</taxon>
    </lineage>
</organism>
<dbReference type="EMBL" id="AB001488">
    <property type="protein sequence ID" value="BAA19288.1"/>
    <property type="molecule type" value="Genomic_DNA"/>
</dbReference>
<dbReference type="EMBL" id="AL009126">
    <property type="protein sequence ID" value="CAB12258.1"/>
    <property type="molecule type" value="Genomic_DNA"/>
</dbReference>
<dbReference type="PIR" id="G69771">
    <property type="entry name" value="G69771"/>
</dbReference>
<dbReference type="RefSeq" id="NP_388332.1">
    <property type="nucleotide sequence ID" value="NC_000964.3"/>
</dbReference>
<dbReference type="RefSeq" id="WP_003225151.1">
    <property type="nucleotide sequence ID" value="NZ_OZ025638.1"/>
</dbReference>
<dbReference type="FunCoup" id="P96607">
    <property type="interactions" value="17"/>
</dbReference>
<dbReference type="STRING" id="224308.BSU04510"/>
<dbReference type="PaxDb" id="224308-BSU04510"/>
<dbReference type="EnsemblBacteria" id="CAB12258">
    <property type="protein sequence ID" value="CAB12258"/>
    <property type="gene ID" value="BSU_04510"/>
</dbReference>
<dbReference type="GeneID" id="938227"/>
<dbReference type="KEGG" id="bsu:BSU04510"/>
<dbReference type="PATRIC" id="fig|224308.179.peg.478"/>
<dbReference type="eggNOG" id="ENOG5030CND">
    <property type="taxonomic scope" value="Bacteria"/>
</dbReference>
<dbReference type="InParanoid" id="P96607"/>
<dbReference type="OrthoDB" id="2939535at2"/>
<dbReference type="BioCyc" id="BSUB:BSU04510-MONOMER"/>
<dbReference type="Proteomes" id="UP000001570">
    <property type="component" value="Chromosome"/>
</dbReference>
<dbReference type="GO" id="GO:0005886">
    <property type="term" value="C:plasma membrane"/>
    <property type="evidence" value="ECO:0007669"/>
    <property type="project" value="UniProtKB-SubCell"/>
</dbReference>
<proteinExistence type="predicted"/>
<protein>
    <recommendedName>
        <fullName>Uncharacterized protein YdbL</fullName>
    </recommendedName>
</protein>
<feature type="chain" id="PRO_0000049489" description="Uncharacterized protein YdbL">
    <location>
        <begin position="1"/>
        <end position="111"/>
    </location>
</feature>
<feature type="transmembrane region" description="Helical" evidence="1">
    <location>
        <begin position="4"/>
        <end position="21"/>
    </location>
</feature>
<feature type="transmembrane region" description="Helical" evidence="1">
    <location>
        <begin position="28"/>
        <end position="47"/>
    </location>
</feature>
<feature type="transmembrane region" description="Helical" evidence="1">
    <location>
        <begin position="51"/>
        <end position="73"/>
    </location>
</feature>
<feature type="transmembrane region" description="Helical" evidence="1">
    <location>
        <begin position="80"/>
        <end position="102"/>
    </location>
</feature>
<name>YDBL_BACSU</name>
<reference key="1">
    <citation type="submission" date="1997-03" db="EMBL/GenBank/DDBJ databases">
        <title>A 148 kbp sequence of the region between 35 and 47 degree of the Bacillus subtilis genome.</title>
        <authorList>
            <person name="Kasahara Y."/>
            <person name="Nakai S."/>
            <person name="Lee S."/>
            <person name="Sadaie Y."/>
            <person name="Ogasawara N."/>
        </authorList>
    </citation>
    <scope>NUCLEOTIDE SEQUENCE [GENOMIC DNA]</scope>
    <source>
        <strain>168</strain>
    </source>
</reference>
<reference key="2">
    <citation type="journal article" date="1997" name="Nature">
        <title>The complete genome sequence of the Gram-positive bacterium Bacillus subtilis.</title>
        <authorList>
            <person name="Kunst F."/>
            <person name="Ogasawara N."/>
            <person name="Moszer I."/>
            <person name="Albertini A.M."/>
            <person name="Alloni G."/>
            <person name="Azevedo V."/>
            <person name="Bertero M.G."/>
            <person name="Bessieres P."/>
            <person name="Bolotin A."/>
            <person name="Borchert S."/>
            <person name="Borriss R."/>
            <person name="Boursier L."/>
            <person name="Brans A."/>
            <person name="Braun M."/>
            <person name="Brignell S.C."/>
            <person name="Bron S."/>
            <person name="Brouillet S."/>
            <person name="Bruschi C.V."/>
            <person name="Caldwell B."/>
            <person name="Capuano V."/>
            <person name="Carter N.M."/>
            <person name="Choi S.-K."/>
            <person name="Codani J.-J."/>
            <person name="Connerton I.F."/>
            <person name="Cummings N.J."/>
            <person name="Daniel R.A."/>
            <person name="Denizot F."/>
            <person name="Devine K.M."/>
            <person name="Duesterhoeft A."/>
            <person name="Ehrlich S.D."/>
            <person name="Emmerson P.T."/>
            <person name="Entian K.-D."/>
            <person name="Errington J."/>
            <person name="Fabret C."/>
            <person name="Ferrari E."/>
            <person name="Foulger D."/>
            <person name="Fritz C."/>
            <person name="Fujita M."/>
            <person name="Fujita Y."/>
            <person name="Fuma S."/>
            <person name="Galizzi A."/>
            <person name="Galleron N."/>
            <person name="Ghim S.-Y."/>
            <person name="Glaser P."/>
            <person name="Goffeau A."/>
            <person name="Golightly E.J."/>
            <person name="Grandi G."/>
            <person name="Guiseppi G."/>
            <person name="Guy B.J."/>
            <person name="Haga K."/>
            <person name="Haiech J."/>
            <person name="Harwood C.R."/>
            <person name="Henaut A."/>
            <person name="Hilbert H."/>
            <person name="Holsappel S."/>
            <person name="Hosono S."/>
            <person name="Hullo M.-F."/>
            <person name="Itaya M."/>
            <person name="Jones L.-M."/>
            <person name="Joris B."/>
            <person name="Karamata D."/>
            <person name="Kasahara Y."/>
            <person name="Klaerr-Blanchard M."/>
            <person name="Klein C."/>
            <person name="Kobayashi Y."/>
            <person name="Koetter P."/>
            <person name="Koningstein G."/>
            <person name="Krogh S."/>
            <person name="Kumano M."/>
            <person name="Kurita K."/>
            <person name="Lapidus A."/>
            <person name="Lardinois S."/>
            <person name="Lauber J."/>
            <person name="Lazarevic V."/>
            <person name="Lee S.-M."/>
            <person name="Levine A."/>
            <person name="Liu H."/>
            <person name="Masuda S."/>
            <person name="Mauel C."/>
            <person name="Medigue C."/>
            <person name="Medina N."/>
            <person name="Mellado R.P."/>
            <person name="Mizuno M."/>
            <person name="Moestl D."/>
            <person name="Nakai S."/>
            <person name="Noback M."/>
            <person name="Noone D."/>
            <person name="O'Reilly M."/>
            <person name="Ogawa K."/>
            <person name="Ogiwara A."/>
            <person name="Oudega B."/>
            <person name="Park S.-H."/>
            <person name="Parro V."/>
            <person name="Pohl T.M."/>
            <person name="Portetelle D."/>
            <person name="Porwollik S."/>
            <person name="Prescott A.M."/>
            <person name="Presecan E."/>
            <person name="Pujic P."/>
            <person name="Purnelle B."/>
            <person name="Rapoport G."/>
            <person name="Rey M."/>
            <person name="Reynolds S."/>
            <person name="Rieger M."/>
            <person name="Rivolta C."/>
            <person name="Rocha E."/>
            <person name="Roche B."/>
            <person name="Rose M."/>
            <person name="Sadaie Y."/>
            <person name="Sato T."/>
            <person name="Scanlan E."/>
            <person name="Schleich S."/>
            <person name="Schroeter R."/>
            <person name="Scoffone F."/>
            <person name="Sekiguchi J."/>
            <person name="Sekowska A."/>
            <person name="Seror S.J."/>
            <person name="Serror P."/>
            <person name="Shin B.-S."/>
            <person name="Soldo B."/>
            <person name="Sorokin A."/>
            <person name="Tacconi E."/>
            <person name="Takagi T."/>
            <person name="Takahashi H."/>
            <person name="Takemaru K."/>
            <person name="Takeuchi M."/>
            <person name="Tamakoshi A."/>
            <person name="Tanaka T."/>
            <person name="Terpstra P."/>
            <person name="Tognoni A."/>
            <person name="Tosato V."/>
            <person name="Uchiyama S."/>
            <person name="Vandenbol M."/>
            <person name="Vannier F."/>
            <person name="Vassarotti A."/>
            <person name="Viari A."/>
            <person name="Wambutt R."/>
            <person name="Wedler E."/>
            <person name="Wedler H."/>
            <person name="Weitzenegger T."/>
            <person name="Winters P."/>
            <person name="Wipat A."/>
            <person name="Yamamoto H."/>
            <person name="Yamane K."/>
            <person name="Yasumoto K."/>
            <person name="Yata K."/>
            <person name="Yoshida K."/>
            <person name="Yoshikawa H.-F."/>
            <person name="Zumstein E."/>
            <person name="Yoshikawa H."/>
            <person name="Danchin A."/>
        </authorList>
    </citation>
    <scope>NUCLEOTIDE SEQUENCE [LARGE SCALE GENOMIC DNA]</scope>
    <source>
        <strain>168</strain>
    </source>
</reference>